<protein>
    <recommendedName>
        <fullName evidence="1">Fructose-6-phosphate aldolase</fullName>
        <ecNumber evidence="1">4.1.2.-</ecNumber>
    </recommendedName>
</protein>
<accession>Q5PK58</accession>
<keyword id="KW-0119">Carbohydrate metabolism</keyword>
<keyword id="KW-0963">Cytoplasm</keyword>
<keyword id="KW-0456">Lyase</keyword>
<keyword id="KW-0704">Schiff base</keyword>
<organism>
    <name type="scientific">Salmonella paratyphi A (strain ATCC 9150 / SARB42)</name>
    <dbReference type="NCBI Taxonomy" id="295319"/>
    <lineage>
        <taxon>Bacteria</taxon>
        <taxon>Pseudomonadati</taxon>
        <taxon>Pseudomonadota</taxon>
        <taxon>Gammaproteobacteria</taxon>
        <taxon>Enterobacterales</taxon>
        <taxon>Enterobacteriaceae</taxon>
        <taxon>Salmonella</taxon>
    </lineage>
</organism>
<feature type="chain" id="PRO_1000050599" description="Fructose-6-phosphate aldolase">
    <location>
        <begin position="1"/>
        <end position="220"/>
    </location>
</feature>
<feature type="active site" description="Schiff-base intermediate with substrate" evidence="1">
    <location>
        <position position="85"/>
    </location>
</feature>
<dbReference type="EC" id="4.1.2.-" evidence="1"/>
<dbReference type="EMBL" id="CP000026">
    <property type="protein sequence ID" value="AAV79717.1"/>
    <property type="molecule type" value="Genomic_DNA"/>
</dbReference>
<dbReference type="RefSeq" id="WP_000424866.1">
    <property type="nucleotide sequence ID" value="NC_006511.1"/>
</dbReference>
<dbReference type="SMR" id="Q5PK58"/>
<dbReference type="KEGG" id="spt:SPA3954"/>
<dbReference type="HOGENOM" id="CLU_079764_2_0_6"/>
<dbReference type="Proteomes" id="UP000008185">
    <property type="component" value="Chromosome"/>
</dbReference>
<dbReference type="GO" id="GO:0005737">
    <property type="term" value="C:cytoplasm"/>
    <property type="evidence" value="ECO:0007669"/>
    <property type="project" value="UniProtKB-SubCell"/>
</dbReference>
<dbReference type="GO" id="GO:0097023">
    <property type="term" value="F:fructose 6-phosphate aldolase activity"/>
    <property type="evidence" value="ECO:0007669"/>
    <property type="project" value="RHEA"/>
</dbReference>
<dbReference type="GO" id="GO:0006000">
    <property type="term" value="P:fructose metabolic process"/>
    <property type="evidence" value="ECO:0007669"/>
    <property type="project" value="UniProtKB-UniRule"/>
</dbReference>
<dbReference type="CDD" id="cd00956">
    <property type="entry name" value="Transaldolase_FSA"/>
    <property type="match status" value="1"/>
</dbReference>
<dbReference type="FunFam" id="3.20.20.70:FF:000018">
    <property type="entry name" value="Probable transaldolase"/>
    <property type="match status" value="1"/>
</dbReference>
<dbReference type="Gene3D" id="3.20.20.70">
    <property type="entry name" value="Aldolase class I"/>
    <property type="match status" value="1"/>
</dbReference>
<dbReference type="HAMAP" id="MF_00496">
    <property type="entry name" value="F6P_aldolase"/>
    <property type="match status" value="1"/>
</dbReference>
<dbReference type="InterPro" id="IPR013785">
    <property type="entry name" value="Aldolase_TIM"/>
</dbReference>
<dbReference type="InterPro" id="IPR023001">
    <property type="entry name" value="F6P_aldolase"/>
</dbReference>
<dbReference type="InterPro" id="IPR001585">
    <property type="entry name" value="TAL/FSA"/>
</dbReference>
<dbReference type="InterPro" id="IPR004731">
    <property type="entry name" value="Transaldolase_3B/F6P_aldolase"/>
</dbReference>
<dbReference type="InterPro" id="IPR018225">
    <property type="entry name" value="Transaldolase_AS"/>
</dbReference>
<dbReference type="InterPro" id="IPR033919">
    <property type="entry name" value="TSA/FSA_arc/bac"/>
</dbReference>
<dbReference type="NCBIfam" id="TIGR00875">
    <property type="entry name" value="fsa_talC_mipB"/>
    <property type="match status" value="1"/>
</dbReference>
<dbReference type="NCBIfam" id="NF009296">
    <property type="entry name" value="PRK12653.1"/>
    <property type="match status" value="1"/>
</dbReference>
<dbReference type="PANTHER" id="PTHR10683:SF40">
    <property type="entry name" value="FRUCTOSE-6-PHOSPHATE ALDOLASE 1-RELATED"/>
    <property type="match status" value="1"/>
</dbReference>
<dbReference type="PANTHER" id="PTHR10683">
    <property type="entry name" value="TRANSALDOLASE"/>
    <property type="match status" value="1"/>
</dbReference>
<dbReference type="Pfam" id="PF00923">
    <property type="entry name" value="TAL_FSA"/>
    <property type="match status" value="1"/>
</dbReference>
<dbReference type="SUPFAM" id="SSF51569">
    <property type="entry name" value="Aldolase"/>
    <property type="match status" value="1"/>
</dbReference>
<dbReference type="PROSITE" id="PS01054">
    <property type="entry name" value="TRANSALDOLASE_1"/>
    <property type="match status" value="1"/>
</dbReference>
<dbReference type="PROSITE" id="PS00958">
    <property type="entry name" value="TRANSALDOLASE_2"/>
    <property type="match status" value="1"/>
</dbReference>
<gene>
    <name evidence="1" type="primary">fsa</name>
    <name type="ordered locus">SPA3954</name>
</gene>
<comment type="function">
    <text evidence="1">Catalyzes the reversible formation of fructose 6-phosphate from dihydroxyacetone and D-glyceraldehyde 3-phosphate via an aldolization reaction.</text>
</comment>
<comment type="catalytic activity">
    <reaction evidence="1">
        <text>beta-D-fructose 6-phosphate = dihydroxyacetone + D-glyceraldehyde 3-phosphate</text>
        <dbReference type="Rhea" id="RHEA:28002"/>
        <dbReference type="ChEBI" id="CHEBI:16016"/>
        <dbReference type="ChEBI" id="CHEBI:57634"/>
        <dbReference type="ChEBI" id="CHEBI:59776"/>
    </reaction>
</comment>
<comment type="subunit">
    <text evidence="1">Homodecamer.</text>
</comment>
<comment type="subcellular location">
    <subcellularLocation>
        <location evidence="1">Cytoplasm</location>
    </subcellularLocation>
</comment>
<comment type="similarity">
    <text evidence="1">Belongs to the transaldolase family. Type 3A subfamily.</text>
</comment>
<evidence type="ECO:0000255" key="1">
    <source>
        <dbReference type="HAMAP-Rule" id="MF_00496"/>
    </source>
</evidence>
<name>FSA_SALPA</name>
<proteinExistence type="inferred from homology"/>
<sequence length="220" mass="23525">MELYLDTANVAEVERLARIFPIAGVTTNPSIVAASKESIWDVLPRLQNAIGEEGTLFAQTMSRDAKGMVEEAKRLNNAIPGIVVKIPVTAEGLAAIKLLKKEGIVTLGTAVYSASQGLLAALAGAKYVAPYVNRVDAQGGDGIRMVQELQTLLEHHAPDSMVLAASFKTPRQALDCLLAGCQAITLPLDVAQQMLNTPAVESAIEKFEQDWKNAFGNLNL</sequence>
<reference key="1">
    <citation type="journal article" date="2004" name="Nat. Genet.">
        <title>Comparison of genome degradation in Paratyphi A and Typhi, human-restricted serovars of Salmonella enterica that cause typhoid.</title>
        <authorList>
            <person name="McClelland M."/>
            <person name="Sanderson K.E."/>
            <person name="Clifton S.W."/>
            <person name="Latreille P."/>
            <person name="Porwollik S."/>
            <person name="Sabo A."/>
            <person name="Meyer R."/>
            <person name="Bieri T."/>
            <person name="Ozersky P."/>
            <person name="McLellan M."/>
            <person name="Harkins C.R."/>
            <person name="Wang C."/>
            <person name="Nguyen C."/>
            <person name="Berghoff A."/>
            <person name="Elliott G."/>
            <person name="Kohlberg S."/>
            <person name="Strong C."/>
            <person name="Du F."/>
            <person name="Carter J."/>
            <person name="Kremizki C."/>
            <person name="Layman D."/>
            <person name="Leonard S."/>
            <person name="Sun H."/>
            <person name="Fulton L."/>
            <person name="Nash W."/>
            <person name="Miner T."/>
            <person name="Minx P."/>
            <person name="Delehaunty K."/>
            <person name="Fronick C."/>
            <person name="Magrini V."/>
            <person name="Nhan M."/>
            <person name="Warren W."/>
            <person name="Florea L."/>
            <person name="Spieth J."/>
            <person name="Wilson R.K."/>
        </authorList>
    </citation>
    <scope>NUCLEOTIDE SEQUENCE [LARGE SCALE GENOMIC DNA]</scope>
    <source>
        <strain>ATCC 9150 / SARB42</strain>
    </source>
</reference>